<feature type="chain" id="PRO_1000200857" description="23S rRNA (uracil(1939)-C(5))-methyltransferase RlmD">
    <location>
        <begin position="1"/>
        <end position="444"/>
    </location>
</feature>
<feature type="domain" description="TRAM" evidence="1">
    <location>
        <begin position="5"/>
        <end position="67"/>
    </location>
</feature>
<feature type="active site" description="Nucleophile" evidence="1">
    <location>
        <position position="400"/>
    </location>
</feature>
<feature type="binding site" evidence="1">
    <location>
        <position position="80"/>
    </location>
    <ligand>
        <name>[4Fe-4S] cluster</name>
        <dbReference type="ChEBI" id="CHEBI:49883"/>
    </ligand>
</feature>
<feature type="binding site" evidence="1">
    <location>
        <position position="86"/>
    </location>
    <ligand>
        <name>[4Fe-4S] cluster</name>
        <dbReference type="ChEBI" id="CHEBI:49883"/>
    </ligand>
</feature>
<feature type="binding site" evidence="1">
    <location>
        <position position="89"/>
    </location>
    <ligand>
        <name>[4Fe-4S] cluster</name>
        <dbReference type="ChEBI" id="CHEBI:49883"/>
    </ligand>
</feature>
<feature type="binding site" evidence="1">
    <location>
        <position position="168"/>
    </location>
    <ligand>
        <name>[4Fe-4S] cluster</name>
        <dbReference type="ChEBI" id="CHEBI:49883"/>
    </ligand>
</feature>
<feature type="binding site" evidence="1">
    <location>
        <position position="276"/>
    </location>
    <ligand>
        <name>S-adenosyl-L-methionine</name>
        <dbReference type="ChEBI" id="CHEBI:59789"/>
    </ligand>
</feature>
<feature type="binding site" evidence="1">
    <location>
        <position position="305"/>
    </location>
    <ligand>
        <name>S-adenosyl-L-methionine</name>
        <dbReference type="ChEBI" id="CHEBI:59789"/>
    </ligand>
</feature>
<feature type="binding site" evidence="1">
    <location>
        <position position="310"/>
    </location>
    <ligand>
        <name>S-adenosyl-L-methionine</name>
        <dbReference type="ChEBI" id="CHEBI:59789"/>
    </ligand>
</feature>
<feature type="binding site" evidence="1">
    <location>
        <position position="326"/>
    </location>
    <ligand>
        <name>S-adenosyl-L-methionine</name>
        <dbReference type="ChEBI" id="CHEBI:59789"/>
    </ligand>
</feature>
<feature type="binding site" evidence="1">
    <location>
        <position position="353"/>
    </location>
    <ligand>
        <name>S-adenosyl-L-methionine</name>
        <dbReference type="ChEBI" id="CHEBI:59789"/>
    </ligand>
</feature>
<feature type="binding site" evidence="1">
    <location>
        <position position="374"/>
    </location>
    <ligand>
        <name>S-adenosyl-L-methionine</name>
        <dbReference type="ChEBI" id="CHEBI:59789"/>
    </ligand>
</feature>
<gene>
    <name evidence="1" type="primary">rlmD</name>
    <name type="synonym">rumA</name>
    <name type="ordered locus">Smlt3541</name>
</gene>
<proteinExistence type="inferred from homology"/>
<dbReference type="EC" id="2.1.1.190" evidence="1"/>
<dbReference type="EMBL" id="AM743169">
    <property type="protein sequence ID" value="CAQ46963.1"/>
    <property type="molecule type" value="Genomic_DNA"/>
</dbReference>
<dbReference type="RefSeq" id="WP_005414201.1">
    <property type="nucleotide sequence ID" value="NC_010943.1"/>
</dbReference>
<dbReference type="SMR" id="B2FPX2"/>
<dbReference type="EnsemblBacteria" id="CAQ46963">
    <property type="protein sequence ID" value="CAQ46963"/>
    <property type="gene ID" value="Smlt3541"/>
</dbReference>
<dbReference type="KEGG" id="sml:Smlt3541"/>
<dbReference type="eggNOG" id="COG2265">
    <property type="taxonomic scope" value="Bacteria"/>
</dbReference>
<dbReference type="HOGENOM" id="CLU_014689_8_2_6"/>
<dbReference type="Proteomes" id="UP000008840">
    <property type="component" value="Chromosome"/>
</dbReference>
<dbReference type="GO" id="GO:0051539">
    <property type="term" value="F:4 iron, 4 sulfur cluster binding"/>
    <property type="evidence" value="ECO:0007669"/>
    <property type="project" value="UniProtKB-KW"/>
</dbReference>
<dbReference type="GO" id="GO:0005506">
    <property type="term" value="F:iron ion binding"/>
    <property type="evidence" value="ECO:0007669"/>
    <property type="project" value="UniProtKB-UniRule"/>
</dbReference>
<dbReference type="GO" id="GO:0003723">
    <property type="term" value="F:RNA binding"/>
    <property type="evidence" value="ECO:0007669"/>
    <property type="project" value="InterPro"/>
</dbReference>
<dbReference type="GO" id="GO:0070041">
    <property type="term" value="F:rRNA (uridine-C5-)-methyltransferase activity"/>
    <property type="evidence" value="ECO:0007669"/>
    <property type="project" value="UniProtKB-UniRule"/>
</dbReference>
<dbReference type="GO" id="GO:0070475">
    <property type="term" value="P:rRNA base methylation"/>
    <property type="evidence" value="ECO:0007669"/>
    <property type="project" value="TreeGrafter"/>
</dbReference>
<dbReference type="CDD" id="cd02440">
    <property type="entry name" value="AdoMet_MTases"/>
    <property type="match status" value="1"/>
</dbReference>
<dbReference type="FunFam" id="3.40.50.150:FF:000009">
    <property type="entry name" value="23S rRNA (Uracil(1939)-C(5))-methyltransferase RlmD"/>
    <property type="match status" value="1"/>
</dbReference>
<dbReference type="FunFam" id="2.40.50.140:FF:000097">
    <property type="entry name" value="23S rRNA (uracil(1939)-C(5))-methyltransferase RlmD"/>
    <property type="match status" value="1"/>
</dbReference>
<dbReference type="Gene3D" id="2.40.50.1070">
    <property type="match status" value="1"/>
</dbReference>
<dbReference type="Gene3D" id="2.40.50.140">
    <property type="entry name" value="Nucleic acid-binding proteins"/>
    <property type="match status" value="1"/>
</dbReference>
<dbReference type="Gene3D" id="3.40.50.150">
    <property type="entry name" value="Vaccinia Virus protein VP39"/>
    <property type="match status" value="1"/>
</dbReference>
<dbReference type="HAMAP" id="MF_01010">
    <property type="entry name" value="23SrRNA_methyltr_RlmD"/>
    <property type="match status" value="1"/>
</dbReference>
<dbReference type="InterPro" id="IPR001566">
    <property type="entry name" value="23S_rRNA_MeTrfase_RlmD"/>
</dbReference>
<dbReference type="InterPro" id="IPR030390">
    <property type="entry name" value="MeTrfase_TrmA_AS"/>
</dbReference>
<dbReference type="InterPro" id="IPR030391">
    <property type="entry name" value="MeTrfase_TrmA_CS"/>
</dbReference>
<dbReference type="InterPro" id="IPR012340">
    <property type="entry name" value="NA-bd_OB-fold"/>
</dbReference>
<dbReference type="InterPro" id="IPR029063">
    <property type="entry name" value="SAM-dependent_MTases_sf"/>
</dbReference>
<dbReference type="InterPro" id="IPR002792">
    <property type="entry name" value="TRAM_dom"/>
</dbReference>
<dbReference type="InterPro" id="IPR010280">
    <property type="entry name" value="U5_MeTrfase_fam"/>
</dbReference>
<dbReference type="NCBIfam" id="NF009639">
    <property type="entry name" value="PRK13168.1"/>
    <property type="match status" value="1"/>
</dbReference>
<dbReference type="NCBIfam" id="TIGR00479">
    <property type="entry name" value="rumA"/>
    <property type="match status" value="1"/>
</dbReference>
<dbReference type="PANTHER" id="PTHR11061:SF49">
    <property type="entry name" value="23S RRNA (URACIL(1939)-C(5))-METHYLTRANSFERASE RLMD"/>
    <property type="match status" value="1"/>
</dbReference>
<dbReference type="PANTHER" id="PTHR11061">
    <property type="entry name" value="RNA M5U METHYLTRANSFERASE"/>
    <property type="match status" value="1"/>
</dbReference>
<dbReference type="Pfam" id="PF05958">
    <property type="entry name" value="tRNA_U5-meth_tr"/>
    <property type="match status" value="1"/>
</dbReference>
<dbReference type="SUPFAM" id="SSF50249">
    <property type="entry name" value="Nucleic acid-binding proteins"/>
    <property type="match status" value="1"/>
</dbReference>
<dbReference type="SUPFAM" id="SSF53335">
    <property type="entry name" value="S-adenosyl-L-methionine-dependent methyltransferases"/>
    <property type="match status" value="1"/>
</dbReference>
<dbReference type="PROSITE" id="PS51687">
    <property type="entry name" value="SAM_MT_RNA_M5U"/>
    <property type="match status" value="1"/>
</dbReference>
<dbReference type="PROSITE" id="PS50926">
    <property type="entry name" value="TRAM"/>
    <property type="match status" value="1"/>
</dbReference>
<dbReference type="PROSITE" id="PS01230">
    <property type="entry name" value="TRMA_1"/>
    <property type="match status" value="1"/>
</dbReference>
<dbReference type="PROSITE" id="PS01231">
    <property type="entry name" value="TRMA_2"/>
    <property type="match status" value="1"/>
</dbReference>
<reference key="1">
    <citation type="journal article" date="2008" name="Genome Biol.">
        <title>The complete genome, comparative and functional analysis of Stenotrophomonas maltophilia reveals an organism heavily shielded by drug resistance determinants.</title>
        <authorList>
            <person name="Crossman L.C."/>
            <person name="Gould V.C."/>
            <person name="Dow J.M."/>
            <person name="Vernikos G.S."/>
            <person name="Okazaki A."/>
            <person name="Sebaihia M."/>
            <person name="Saunders D."/>
            <person name="Arrowsmith C."/>
            <person name="Carver T."/>
            <person name="Peters N."/>
            <person name="Adlem E."/>
            <person name="Kerhornou A."/>
            <person name="Lord A."/>
            <person name="Murphy L."/>
            <person name="Seeger K."/>
            <person name="Squares R."/>
            <person name="Rutter S."/>
            <person name="Quail M.A."/>
            <person name="Rajandream M.A."/>
            <person name="Harris D."/>
            <person name="Churcher C."/>
            <person name="Bentley S.D."/>
            <person name="Parkhill J."/>
            <person name="Thomson N.R."/>
            <person name="Avison M.B."/>
        </authorList>
    </citation>
    <scope>NUCLEOTIDE SEQUENCE [LARGE SCALE GENOMIC DNA]</scope>
    <source>
        <strain>K279a</strain>
    </source>
</reference>
<organism>
    <name type="scientific">Stenotrophomonas maltophilia (strain K279a)</name>
    <dbReference type="NCBI Taxonomy" id="522373"/>
    <lineage>
        <taxon>Bacteria</taxon>
        <taxon>Pseudomonadati</taxon>
        <taxon>Pseudomonadota</taxon>
        <taxon>Gammaproteobacteria</taxon>
        <taxon>Lysobacterales</taxon>
        <taxon>Lysobacteraceae</taxon>
        <taxon>Stenotrophomonas</taxon>
        <taxon>Stenotrophomonas maltophilia group</taxon>
    </lineage>
</organism>
<accession>B2FPX2</accession>
<comment type="function">
    <text evidence="1">Catalyzes the formation of 5-methyl-uridine at position 1939 (m5U1939) in 23S rRNA.</text>
</comment>
<comment type="catalytic activity">
    <reaction evidence="1">
        <text>uridine(1939) in 23S rRNA + S-adenosyl-L-methionine = 5-methyluridine(1939) in 23S rRNA + S-adenosyl-L-homocysteine + H(+)</text>
        <dbReference type="Rhea" id="RHEA:42908"/>
        <dbReference type="Rhea" id="RHEA-COMP:10278"/>
        <dbReference type="Rhea" id="RHEA-COMP:10279"/>
        <dbReference type="ChEBI" id="CHEBI:15378"/>
        <dbReference type="ChEBI" id="CHEBI:57856"/>
        <dbReference type="ChEBI" id="CHEBI:59789"/>
        <dbReference type="ChEBI" id="CHEBI:65315"/>
        <dbReference type="ChEBI" id="CHEBI:74447"/>
        <dbReference type="EC" id="2.1.1.190"/>
    </reaction>
</comment>
<comment type="similarity">
    <text evidence="1">Belongs to the class I-like SAM-binding methyltransferase superfamily. RNA M5U methyltransferase family. RlmD subfamily.</text>
</comment>
<sequence length="444" mass="49216">MARSRSRIDRTPFQTEILDLSHDGRGVARREGEGGKVTFVSGALPGEVVMAEQTARSRHFDEARTVEVLQASPQRVTPKCPHFGTCAGCVLQHLDEDQQIVAKQRVLMDNLERIGHVKPGKVLAPLVGESWGYRRKGRFSVRRVEKKDKTLVGFREQDPRFVADLSQCLTVIPEIGTKVEALSTFIESLDGKRDIPQIEFIAGDQAVVLTVRHLQPLSDADRAAWAAFGQQHGFVIYLQSGGVDTVQPLDGQGVPLSFRLAPWDVELAFRPLDFIQVNAKLNEKMIAHALDLLEPGEDERVLDLFCGLGNFTLPLARRVREVVGVEGDAGLVARARENAVRNGLANAQFFSADLTQDQRSTPWMRQGFDKLLLDPPRSGAIEVLQQLPLKQFKRIVYVSCHPGSLARDAGYLVNEQGFTLVSAGAMDMFPHTAHVESIAVFEKR</sequence>
<evidence type="ECO:0000255" key="1">
    <source>
        <dbReference type="HAMAP-Rule" id="MF_01010"/>
    </source>
</evidence>
<name>RLMD_STRMK</name>
<keyword id="KW-0004">4Fe-4S</keyword>
<keyword id="KW-0408">Iron</keyword>
<keyword id="KW-0411">Iron-sulfur</keyword>
<keyword id="KW-0479">Metal-binding</keyword>
<keyword id="KW-0489">Methyltransferase</keyword>
<keyword id="KW-1185">Reference proteome</keyword>
<keyword id="KW-0698">rRNA processing</keyword>
<keyword id="KW-0949">S-adenosyl-L-methionine</keyword>
<keyword id="KW-0808">Transferase</keyword>
<protein>
    <recommendedName>
        <fullName evidence="1">23S rRNA (uracil(1939)-C(5))-methyltransferase RlmD</fullName>
        <ecNumber evidence="1">2.1.1.190</ecNumber>
    </recommendedName>
    <alternativeName>
        <fullName evidence="1">23S rRNA(m5U1939)-methyltransferase</fullName>
    </alternativeName>
</protein>